<accession>A9R1E4</accession>
<name>CLCA_YERPG</name>
<organism>
    <name type="scientific">Yersinia pestis bv. Antiqua (strain Angola)</name>
    <dbReference type="NCBI Taxonomy" id="349746"/>
    <lineage>
        <taxon>Bacteria</taxon>
        <taxon>Pseudomonadati</taxon>
        <taxon>Pseudomonadota</taxon>
        <taxon>Gammaproteobacteria</taxon>
        <taxon>Enterobacterales</taxon>
        <taxon>Yersiniaceae</taxon>
        <taxon>Yersinia</taxon>
    </lineage>
</organism>
<gene>
    <name evidence="1" type="primary">clcA</name>
    <name evidence="1" type="synonym">eriC</name>
    <name type="ordered locus">YpAngola_A0993</name>
</gene>
<protein>
    <recommendedName>
        <fullName evidence="1">H(+)/Cl(-) exchange transporter ClcA</fullName>
    </recommendedName>
</protein>
<sequence length="478" mass="50847">MTHSTQQLSPEGVAEGKRGRLIRELVNRDKTPLIILIMAAVVGVVTGLLGVAFDRGVDWVQQQRLLALANVADYALLVWPLAFIMSALLAMMGYFLVSRFAPEAGGSGIPEIEGAMEEMRPVRWWRVIPVKFIGGLGTLGAGMVLGREGPMVQMGGNSGRMIVDIFRLRSPEARHSLLATGAAAGLSAAFNAPLAGILFVIEEMRSQFRYSLVSIKAVFIGVITSTIVYRYFNGERAIIEVGKLSDAPLNTLWLYLLLGIIFGAVGVIFNALIFRTQDMFVRFHGGDWRKLVLIGGLLGGMCGLLALLHGNAVGGGFALIPIAAAGNFSIGMLLFIFIARVITTLLCFGSGAPGGIFAPMLALGTILGTAFGLSCAHFFPQYGIEAGTFAIAGMGALFAASVRAPLTGIVLVLEMTDNYQLILPMIVTCLGATLIAQFMGGKPLYSAILARTLAKQEQARATVIAQEPAVENTPQIGK</sequence>
<dbReference type="EMBL" id="CP000901">
    <property type="protein sequence ID" value="ABX85755.1"/>
    <property type="molecule type" value="Genomic_DNA"/>
</dbReference>
<dbReference type="RefSeq" id="WP_002209364.1">
    <property type="nucleotide sequence ID" value="NZ_CP009935.1"/>
</dbReference>
<dbReference type="SMR" id="A9R1E4"/>
<dbReference type="GeneID" id="57975321"/>
<dbReference type="KEGG" id="ypg:YpAngola_A0993"/>
<dbReference type="PATRIC" id="fig|349746.12.peg.1944"/>
<dbReference type="GO" id="GO:0005886">
    <property type="term" value="C:plasma membrane"/>
    <property type="evidence" value="ECO:0007669"/>
    <property type="project" value="UniProtKB-SubCell"/>
</dbReference>
<dbReference type="GO" id="GO:0015297">
    <property type="term" value="F:antiporter activity"/>
    <property type="evidence" value="ECO:0007669"/>
    <property type="project" value="UniProtKB-UniRule"/>
</dbReference>
<dbReference type="GO" id="GO:0005247">
    <property type="term" value="F:voltage-gated chloride channel activity"/>
    <property type="evidence" value="ECO:0007669"/>
    <property type="project" value="TreeGrafter"/>
</dbReference>
<dbReference type="CDD" id="cd01031">
    <property type="entry name" value="EriC"/>
    <property type="match status" value="1"/>
</dbReference>
<dbReference type="FunFam" id="1.10.3080.10:FF:000005">
    <property type="entry name" value="H(+)/Cl(-) exchange transporter ClcA"/>
    <property type="match status" value="1"/>
</dbReference>
<dbReference type="Gene3D" id="1.10.3080.10">
    <property type="entry name" value="Clc chloride channel"/>
    <property type="match status" value="1"/>
</dbReference>
<dbReference type="HAMAP" id="MF_01128">
    <property type="entry name" value="CLC_ClcA"/>
    <property type="match status" value="1"/>
</dbReference>
<dbReference type="InterPro" id="IPR023861">
    <property type="entry name" value="Cl-channel_ClcA"/>
</dbReference>
<dbReference type="InterPro" id="IPR014743">
    <property type="entry name" value="Cl-channel_core"/>
</dbReference>
<dbReference type="InterPro" id="IPR001807">
    <property type="entry name" value="ClC"/>
</dbReference>
<dbReference type="NCBIfam" id="NF003640">
    <property type="entry name" value="PRK05277.1"/>
    <property type="match status" value="1"/>
</dbReference>
<dbReference type="PANTHER" id="PTHR45711">
    <property type="entry name" value="CHLORIDE CHANNEL PROTEIN"/>
    <property type="match status" value="1"/>
</dbReference>
<dbReference type="PANTHER" id="PTHR45711:SF6">
    <property type="entry name" value="CHLORIDE CHANNEL PROTEIN"/>
    <property type="match status" value="1"/>
</dbReference>
<dbReference type="Pfam" id="PF00654">
    <property type="entry name" value="Voltage_CLC"/>
    <property type="match status" value="1"/>
</dbReference>
<dbReference type="PRINTS" id="PR00762">
    <property type="entry name" value="CLCHANNEL"/>
</dbReference>
<dbReference type="SUPFAM" id="SSF81340">
    <property type="entry name" value="Clc chloride channel"/>
    <property type="match status" value="1"/>
</dbReference>
<feature type="chain" id="PRO_1000137313" description="H(+)/Cl(-) exchange transporter ClcA">
    <location>
        <begin position="1"/>
        <end position="478"/>
    </location>
</feature>
<feature type="topological domain" description="Cytoplasmic" evidence="1">
    <location>
        <begin position="1"/>
        <end position="32"/>
    </location>
</feature>
<feature type="transmembrane region" description="Helical" evidence="1">
    <location>
        <begin position="33"/>
        <end position="69"/>
    </location>
</feature>
<feature type="topological domain" description="Periplasmic" evidence="1">
    <location>
        <begin position="70"/>
        <end position="76"/>
    </location>
</feature>
<feature type="transmembrane region" description="Helical" evidence="1">
    <location>
        <begin position="77"/>
        <end position="100"/>
    </location>
</feature>
<feature type="intramembrane region" description="Helical" evidence="1">
    <location>
        <begin position="109"/>
        <end position="116"/>
    </location>
</feature>
<feature type="topological domain" description="Cytoplasmic" evidence="1">
    <location>
        <begin position="117"/>
        <end position="123"/>
    </location>
</feature>
<feature type="transmembrane region" description="Helical" evidence="1">
    <location>
        <begin position="124"/>
        <end position="141"/>
    </location>
</feature>
<feature type="transmembrane region" description="Helical" evidence="1">
    <location>
        <begin position="148"/>
        <end position="166"/>
    </location>
</feature>
<feature type="topological domain" description="Cytoplasmic" evidence="1">
    <location>
        <begin position="167"/>
        <end position="176"/>
    </location>
</feature>
<feature type="intramembrane region" description="Helical" evidence="1">
    <location>
        <begin position="177"/>
        <end position="189"/>
    </location>
</feature>
<feature type="intramembrane region" description="Helical" evidence="1">
    <location>
        <begin position="193"/>
        <end position="201"/>
    </location>
</feature>
<feature type="topological domain" description="Cytoplasmic" evidence="1">
    <location>
        <begin position="202"/>
        <end position="214"/>
    </location>
</feature>
<feature type="transmembrane region" description="Helical" evidence="1">
    <location>
        <begin position="215"/>
        <end position="232"/>
    </location>
</feature>
<feature type="topological domain" description="Periplasmic" evidence="1">
    <location>
        <begin position="233"/>
        <end position="252"/>
    </location>
</feature>
<feature type="transmembrane region" description="Helical" evidence="1">
    <location>
        <begin position="253"/>
        <end position="281"/>
    </location>
</feature>
<feature type="topological domain" description="Cytoplasmic" evidence="1">
    <location>
        <begin position="282"/>
        <end position="287"/>
    </location>
</feature>
<feature type="transmembrane region" description="Helical" evidence="1">
    <location>
        <begin position="288"/>
        <end position="309"/>
    </location>
</feature>
<feature type="topological domain" description="Periplasmic" evidence="1">
    <location>
        <begin position="310"/>
        <end position="329"/>
    </location>
</feature>
<feature type="transmembrane region" description="Helical" evidence="1">
    <location>
        <begin position="330"/>
        <end position="349"/>
    </location>
</feature>
<feature type="transmembrane region" description="Helical" evidence="1">
    <location>
        <begin position="355"/>
        <end position="376"/>
    </location>
</feature>
<feature type="topological domain" description="Periplasmic" evidence="1">
    <location>
        <begin position="377"/>
        <end position="386"/>
    </location>
</feature>
<feature type="intramembrane region" description="Helical" evidence="1">
    <location>
        <begin position="387"/>
        <end position="401"/>
    </location>
</feature>
<feature type="intramembrane region" description="Note=Loop between two helices" evidence="1">
    <location>
        <begin position="402"/>
        <end position="404"/>
    </location>
</feature>
<feature type="intramembrane region" description="Helical" evidence="1">
    <location>
        <begin position="405"/>
        <end position="416"/>
    </location>
</feature>
<feature type="intramembrane region" description="Note=Loop between two helices" evidence="1">
    <location>
        <begin position="417"/>
        <end position="421"/>
    </location>
</feature>
<feature type="transmembrane region" description="Helical" evidence="1">
    <location>
        <begin position="422"/>
        <end position="438"/>
    </location>
</feature>
<feature type="topological domain" description="Cytoplasmic" evidence="1">
    <location>
        <begin position="439"/>
        <end position="478"/>
    </location>
</feature>
<feature type="short sequence motif" description="Selectivity filter part_1" evidence="1">
    <location>
        <begin position="106"/>
        <end position="110"/>
    </location>
</feature>
<feature type="short sequence motif" description="Selectivity filter part_2" evidence="1">
    <location>
        <begin position="146"/>
        <end position="150"/>
    </location>
</feature>
<feature type="short sequence motif" description="Selectivity filter part_3" evidence="1">
    <location>
        <begin position="355"/>
        <end position="359"/>
    </location>
</feature>
<feature type="binding site" evidence="1">
    <location>
        <position position="107"/>
    </location>
    <ligand>
        <name>chloride</name>
        <dbReference type="ChEBI" id="CHEBI:17996"/>
    </ligand>
</feature>
<feature type="binding site" evidence="1">
    <location>
        <position position="356"/>
    </location>
    <ligand>
        <name>chloride</name>
        <dbReference type="ChEBI" id="CHEBI:17996"/>
    </ligand>
</feature>
<feature type="binding site" evidence="1">
    <location>
        <position position="357"/>
    </location>
    <ligand>
        <name>chloride</name>
        <dbReference type="ChEBI" id="CHEBI:17996"/>
    </ligand>
</feature>
<feature type="binding site" evidence="1">
    <location>
        <position position="445"/>
    </location>
    <ligand>
        <name>chloride</name>
        <dbReference type="ChEBI" id="CHEBI:17996"/>
    </ligand>
</feature>
<feature type="site" description="Mediates proton transfer from the outer aqueous phase to the interior of the protein; involved in linking H(+) and Cl(-) transport" evidence="1">
    <location>
        <position position="148"/>
    </location>
</feature>
<feature type="site" description="Mediates proton transfer from the protein to the inner aqueous phase" evidence="1">
    <location>
        <position position="203"/>
    </location>
</feature>
<comment type="function">
    <text evidence="1">Proton-coupled chloride transporter. Functions as antiport system and exchanges two chloride ions for 1 proton. Probably acts as an electrical shunt for an outwardly-directed proton pump that is linked to amino acid decarboxylation, as part of the extreme acid resistance (XAR) response.</text>
</comment>
<comment type="catalytic activity">
    <reaction evidence="1">
        <text>2 chloride(in) + H(+)(out) = 2 chloride(out) + H(+)(in)</text>
        <dbReference type="Rhea" id="RHEA:29567"/>
        <dbReference type="ChEBI" id="CHEBI:15378"/>
        <dbReference type="ChEBI" id="CHEBI:17996"/>
    </reaction>
</comment>
<comment type="subunit">
    <text evidence="1">Homodimer.</text>
</comment>
<comment type="subcellular location">
    <subcellularLocation>
        <location evidence="1">Cell inner membrane</location>
        <topology evidence="1">Multi-pass membrane protein</topology>
    </subcellularLocation>
</comment>
<comment type="similarity">
    <text evidence="1">Belongs to the chloride channel (TC 2.A.49) family. ClcA subfamily.</text>
</comment>
<keyword id="KW-0050">Antiport</keyword>
<keyword id="KW-0997">Cell inner membrane</keyword>
<keyword id="KW-1003">Cell membrane</keyword>
<keyword id="KW-0868">Chloride</keyword>
<keyword id="KW-0406">Ion transport</keyword>
<keyword id="KW-0472">Membrane</keyword>
<keyword id="KW-0812">Transmembrane</keyword>
<keyword id="KW-1133">Transmembrane helix</keyword>
<keyword id="KW-0813">Transport</keyword>
<evidence type="ECO:0000255" key="1">
    <source>
        <dbReference type="HAMAP-Rule" id="MF_01128"/>
    </source>
</evidence>
<reference key="1">
    <citation type="journal article" date="2010" name="J. Bacteriol.">
        <title>Genome sequence of the deep-rooted Yersinia pestis strain Angola reveals new insights into the evolution and pangenome of the plague bacterium.</title>
        <authorList>
            <person name="Eppinger M."/>
            <person name="Worsham P.L."/>
            <person name="Nikolich M.P."/>
            <person name="Riley D.R."/>
            <person name="Sebastian Y."/>
            <person name="Mou S."/>
            <person name="Achtman M."/>
            <person name="Lindler L.E."/>
            <person name="Ravel J."/>
        </authorList>
    </citation>
    <scope>NUCLEOTIDE SEQUENCE [LARGE SCALE GENOMIC DNA]</scope>
    <source>
        <strain>Angola</strain>
    </source>
</reference>
<proteinExistence type="inferred from homology"/>